<name>DDGS_TRIV2</name>
<keyword id="KW-0002">3D-structure</keyword>
<keyword id="KW-0170">Cobalt</keyword>
<keyword id="KW-0456">Lyase</keyword>
<keyword id="KW-0479">Metal-binding</keyword>
<keyword id="KW-0520">NAD</keyword>
<keyword id="KW-0547">Nucleotide-binding</keyword>
<keyword id="KW-0862">Zinc</keyword>
<proteinExistence type="evidence at protein level"/>
<organism>
    <name type="scientific">Trichormus variabilis (strain ATCC 29413 / PCC 7937)</name>
    <name type="common">Anabaena variabilis</name>
    <dbReference type="NCBI Taxonomy" id="240292"/>
    <lineage>
        <taxon>Bacteria</taxon>
        <taxon>Bacillati</taxon>
        <taxon>Cyanobacteriota</taxon>
        <taxon>Cyanophyceae</taxon>
        <taxon>Nostocales</taxon>
        <taxon>Nostocaceae</taxon>
        <taxon>Trichormus</taxon>
    </lineage>
</organism>
<accession>Q3M6C3</accession>
<gene>
    <name evidence="6" type="ordered locus">Ava_3858</name>
</gene>
<dbReference type="EC" id="4.2.3.154" evidence="2"/>
<dbReference type="EMBL" id="CP000117">
    <property type="protein sequence ID" value="ABA23463.1"/>
    <property type="molecule type" value="Genomic_DNA"/>
</dbReference>
<dbReference type="PDB" id="5TPR">
    <property type="method" value="X-ray"/>
    <property type="resolution" value="1.70 A"/>
    <property type="chains" value="A/B=1-410"/>
</dbReference>
<dbReference type="PDBsum" id="5TPR"/>
<dbReference type="SMR" id="Q3M6C3"/>
<dbReference type="STRING" id="240292.Ava_3858"/>
<dbReference type="DNASU" id="3678498"/>
<dbReference type="KEGG" id="ava:Ava_3858"/>
<dbReference type="eggNOG" id="COG0337">
    <property type="taxonomic scope" value="Bacteria"/>
</dbReference>
<dbReference type="HOGENOM" id="CLU_001201_0_4_3"/>
<dbReference type="BRENDA" id="4.2.3.154">
    <property type="organism ID" value="322"/>
</dbReference>
<dbReference type="Proteomes" id="UP000002533">
    <property type="component" value="Chromosome"/>
</dbReference>
<dbReference type="GO" id="GO:0003856">
    <property type="term" value="F:3-dehydroquinate synthase activity"/>
    <property type="evidence" value="ECO:0007669"/>
    <property type="project" value="TreeGrafter"/>
</dbReference>
<dbReference type="GO" id="GO:0046872">
    <property type="term" value="F:metal ion binding"/>
    <property type="evidence" value="ECO:0007669"/>
    <property type="project" value="UniProtKB-KW"/>
</dbReference>
<dbReference type="GO" id="GO:0000166">
    <property type="term" value="F:nucleotide binding"/>
    <property type="evidence" value="ECO:0007669"/>
    <property type="project" value="UniProtKB-KW"/>
</dbReference>
<dbReference type="GO" id="GO:0017000">
    <property type="term" value="P:antibiotic biosynthetic process"/>
    <property type="evidence" value="ECO:0007669"/>
    <property type="project" value="InterPro"/>
</dbReference>
<dbReference type="CDD" id="cd08199">
    <property type="entry name" value="EEVS"/>
    <property type="match status" value="1"/>
</dbReference>
<dbReference type="FunFam" id="1.20.1090.10:FF:000015">
    <property type="entry name" value="3-dehydroquinate synthase protein"/>
    <property type="match status" value="1"/>
</dbReference>
<dbReference type="FunFam" id="3.40.50.1970:FF:000018">
    <property type="entry name" value="Related to 2-epi-5-epi-valiolone synthase"/>
    <property type="match status" value="1"/>
</dbReference>
<dbReference type="Gene3D" id="3.40.50.1970">
    <property type="match status" value="1"/>
</dbReference>
<dbReference type="Gene3D" id="1.20.1090.10">
    <property type="entry name" value="Dehydroquinate synthase-like - alpha domain"/>
    <property type="match status" value="1"/>
</dbReference>
<dbReference type="InterPro" id="IPR050071">
    <property type="entry name" value="Dehydroquinate_synthase"/>
</dbReference>
<dbReference type="InterPro" id="IPR030960">
    <property type="entry name" value="DHQS/DOIS_N"/>
</dbReference>
<dbReference type="InterPro" id="IPR056179">
    <property type="entry name" value="DHQS_C"/>
</dbReference>
<dbReference type="InterPro" id="IPR035872">
    <property type="entry name" value="EEVS-like"/>
</dbReference>
<dbReference type="PANTHER" id="PTHR43622:SF3">
    <property type="entry name" value="2-EPI-5-EPI-VALIOLONE SYNTHASE"/>
    <property type="match status" value="1"/>
</dbReference>
<dbReference type="PANTHER" id="PTHR43622">
    <property type="entry name" value="3-DEHYDROQUINATE SYNTHASE"/>
    <property type="match status" value="1"/>
</dbReference>
<dbReference type="Pfam" id="PF01761">
    <property type="entry name" value="DHQ_synthase"/>
    <property type="match status" value="1"/>
</dbReference>
<dbReference type="Pfam" id="PF24621">
    <property type="entry name" value="DHQS_C"/>
    <property type="match status" value="1"/>
</dbReference>
<dbReference type="SUPFAM" id="SSF56796">
    <property type="entry name" value="Dehydroquinate synthase-like"/>
    <property type="match status" value="1"/>
</dbReference>
<reference key="1">
    <citation type="journal article" date="2014" name="Stand. Genomic Sci.">
        <title>Complete genome sequence of Anabaena variabilis ATCC 29413.</title>
        <authorList>
            <person name="Thiel T."/>
            <person name="Pratte B.S."/>
            <person name="Zhong J."/>
            <person name="Goodwin L."/>
            <person name="Copeland A."/>
            <person name="Lucas S."/>
            <person name="Han C."/>
            <person name="Pitluck S."/>
            <person name="Land M.L."/>
            <person name="Kyrpides N.C."/>
            <person name="Woyke T."/>
        </authorList>
    </citation>
    <scope>NUCLEOTIDE SEQUENCE [LARGE SCALE GENOMIC DNA]</scope>
    <source>
        <strain>ATCC 29413 / PCC 7937</strain>
    </source>
</reference>
<reference key="2">
    <citation type="journal article" date="2012" name="J. Am. Chem. Soc.">
        <title>Evolutionary divergence of sedoheptulose 7-phosphate cyclases leads to several distinct cyclic products.</title>
        <authorList>
            <person name="Asamizu S."/>
            <person name="Xie P."/>
            <person name="Brumsted C.J."/>
            <person name="Flatt P.M."/>
            <person name="Mahmud T."/>
        </authorList>
    </citation>
    <scope>FUNCTION</scope>
    <scope>CATALYTIC ACTIVITY</scope>
    <scope>COFACTOR</scope>
    <scope>BIOPHYSICOCHEMICAL PROPERTIES</scope>
</reference>
<reference evidence="7" key="3">
    <citation type="journal article" date="2017" name="ACS Chem. Biol.">
        <title>Evolution and distribution of C7-cyclitol synthases in prokaryotes and eukaryotes.</title>
        <authorList>
            <person name="Osborn A.R."/>
            <person name="Kean K.M."/>
            <person name="Alseud K.M."/>
            <person name="Almabruk K.H."/>
            <person name="Asamizu S."/>
            <person name="Lee J.A."/>
            <person name="Karplus P.A."/>
            <person name="Mahmud T."/>
        </authorList>
    </citation>
    <scope>X-RAY CRYSTALLOGRAPHY (1.70 ANGSTROMS) IN COMPLEX WITH NAD AND ZINC</scope>
    <scope>COFACTOR</scope>
    <scope>SUBUNIT</scope>
    <scope>MUTAGENESIS OF GLU-254; ALA-268 AND THR-347</scope>
</reference>
<feature type="chain" id="PRO_0000441281" description="Demethyl-4-deoxygadusol synthase">
    <location>
        <begin position="1"/>
        <end position="410"/>
    </location>
</feature>
<feature type="binding site" evidence="3">
    <location>
        <begin position="56"/>
        <end position="58"/>
    </location>
    <ligand>
        <name>NAD(+)</name>
        <dbReference type="ChEBI" id="CHEBI:57540"/>
    </ligand>
</feature>
<feature type="binding site" evidence="3">
    <location>
        <begin position="87"/>
        <end position="90"/>
    </location>
    <ligand>
        <name>NAD(+)</name>
        <dbReference type="ChEBI" id="CHEBI:57540"/>
    </ligand>
</feature>
<feature type="binding site" evidence="3">
    <location>
        <begin position="119"/>
        <end position="123"/>
    </location>
    <ligand>
        <name>NAD(+)</name>
        <dbReference type="ChEBI" id="CHEBI:57540"/>
    </ligand>
</feature>
<feature type="binding site" evidence="3">
    <location>
        <begin position="143"/>
        <end position="144"/>
    </location>
    <ligand>
        <name>NAD(+)</name>
        <dbReference type="ChEBI" id="CHEBI:57540"/>
    </ligand>
</feature>
<feature type="binding site" evidence="3">
    <location>
        <position position="156"/>
    </location>
    <ligand>
        <name>NAD(+)</name>
        <dbReference type="ChEBI" id="CHEBI:57540"/>
    </ligand>
</feature>
<feature type="binding site" evidence="3">
    <location>
        <position position="165"/>
    </location>
    <ligand>
        <name>NAD(+)</name>
        <dbReference type="ChEBI" id="CHEBI:57540"/>
    </ligand>
</feature>
<feature type="binding site" evidence="3">
    <location>
        <begin position="183"/>
        <end position="186"/>
    </location>
    <ligand>
        <name>NAD(+)</name>
        <dbReference type="ChEBI" id="CHEBI:57540"/>
    </ligand>
</feature>
<feature type="binding site" evidence="3 7">
    <location>
        <position position="198"/>
    </location>
    <ligand>
        <name>Zn(2+)</name>
        <dbReference type="ChEBI" id="CHEBI:29105"/>
    </ligand>
</feature>
<feature type="binding site" evidence="3 7">
    <location>
        <position position="271"/>
    </location>
    <ligand>
        <name>Zn(2+)</name>
        <dbReference type="ChEBI" id="CHEBI:29105"/>
    </ligand>
</feature>
<feature type="binding site" evidence="3 7">
    <location>
        <position position="287"/>
    </location>
    <ligand>
        <name>Zn(2+)</name>
        <dbReference type="ChEBI" id="CHEBI:29105"/>
    </ligand>
</feature>
<feature type="mutagenesis site" description="Loss of activity." evidence="3">
    <original>E</original>
    <variation>L</variation>
    <location>
        <position position="254"/>
    </location>
</feature>
<feature type="mutagenesis site" description="Loss of activity." evidence="3">
    <original>A</original>
    <variation>D</variation>
    <location>
        <position position="268"/>
    </location>
</feature>
<feature type="mutagenesis site" description="No change in activity." evidence="3">
    <original>T</original>
    <variation>H</variation>
    <location>
        <position position="347"/>
    </location>
</feature>
<feature type="strand" evidence="8">
    <location>
        <begin position="4"/>
        <end position="10"/>
    </location>
</feature>
<feature type="strand" evidence="8">
    <location>
        <begin position="12"/>
        <end position="29"/>
    </location>
</feature>
<feature type="helix" evidence="8">
    <location>
        <begin position="40"/>
        <end position="45"/>
    </location>
</feature>
<feature type="turn" evidence="8">
    <location>
        <begin position="46"/>
        <end position="48"/>
    </location>
</feature>
<feature type="strand" evidence="8">
    <location>
        <begin position="49"/>
        <end position="56"/>
    </location>
</feature>
<feature type="helix" evidence="8">
    <location>
        <begin position="57"/>
        <end position="74"/>
    </location>
</feature>
<feature type="strand" evidence="8">
    <location>
        <begin position="77"/>
        <end position="83"/>
    </location>
</feature>
<feature type="helix" evidence="8">
    <location>
        <begin position="87"/>
        <end position="89"/>
    </location>
</feature>
<feature type="helix" evidence="8">
    <location>
        <begin position="92"/>
        <end position="105"/>
    </location>
</feature>
<feature type="strand" evidence="8">
    <location>
        <begin position="113"/>
        <end position="118"/>
    </location>
</feature>
<feature type="helix" evidence="8">
    <location>
        <begin position="119"/>
        <end position="131"/>
    </location>
</feature>
<feature type="strand" evidence="8">
    <location>
        <begin position="138"/>
        <end position="142"/>
    </location>
</feature>
<feature type="helix" evidence="8">
    <location>
        <begin position="145"/>
        <end position="149"/>
    </location>
</feature>
<feature type="turn" evidence="8">
    <location>
        <begin position="150"/>
        <end position="153"/>
    </location>
</feature>
<feature type="strand" evidence="8">
    <location>
        <begin position="156"/>
        <end position="161"/>
    </location>
</feature>
<feature type="strand" evidence="8">
    <location>
        <begin position="164"/>
        <end position="171"/>
    </location>
</feature>
<feature type="strand" evidence="8">
    <location>
        <begin position="175"/>
        <end position="179"/>
    </location>
</feature>
<feature type="helix" evidence="8">
    <location>
        <begin position="181"/>
        <end position="186"/>
    </location>
</feature>
<feature type="helix" evidence="8">
    <location>
        <begin position="189"/>
        <end position="206"/>
    </location>
</feature>
<feature type="helix" evidence="8">
    <location>
        <begin position="208"/>
        <end position="223"/>
    </location>
</feature>
<feature type="turn" evidence="8">
    <location>
        <begin position="224"/>
        <end position="228"/>
    </location>
</feature>
<feature type="helix" evidence="8">
    <location>
        <begin position="233"/>
        <end position="254"/>
    </location>
</feature>
<feature type="helix" evidence="8">
    <location>
        <begin position="255"/>
        <end position="257"/>
    </location>
</feature>
<feature type="helix" evidence="8">
    <location>
        <begin position="266"/>
        <end position="268"/>
    </location>
</feature>
<feature type="helix" evidence="8">
    <location>
        <begin position="274"/>
        <end position="278"/>
    </location>
</feature>
<feature type="strand" evidence="8">
    <location>
        <begin position="280"/>
        <end position="283"/>
    </location>
</feature>
<feature type="helix" evidence="8">
    <location>
        <begin position="287"/>
        <end position="304"/>
    </location>
</feature>
<feature type="helix" evidence="8">
    <location>
        <begin position="310"/>
        <end position="322"/>
    </location>
</feature>
<feature type="helix" evidence="8">
    <location>
        <begin position="334"/>
        <end position="347"/>
    </location>
</feature>
<feature type="turn" evidence="8">
    <location>
        <begin position="348"/>
        <end position="350"/>
    </location>
</feature>
<feature type="strand" evidence="8">
    <location>
        <begin position="354"/>
        <end position="359"/>
    </location>
</feature>
<feature type="strand" evidence="8">
    <location>
        <begin position="363"/>
        <end position="366"/>
    </location>
</feature>
<feature type="helix" evidence="8">
    <location>
        <begin position="371"/>
        <end position="385"/>
    </location>
</feature>
<feature type="helix" evidence="8">
    <location>
        <begin position="389"/>
        <end position="392"/>
    </location>
</feature>
<evidence type="ECO:0000250" key="1">
    <source>
        <dbReference type="UniProtKB" id="B2J6X9"/>
    </source>
</evidence>
<evidence type="ECO:0000269" key="2">
    <source>
    </source>
</evidence>
<evidence type="ECO:0000269" key="3">
    <source>
    </source>
</evidence>
<evidence type="ECO:0000303" key="4">
    <source>
    </source>
</evidence>
<evidence type="ECO:0000305" key="5"/>
<evidence type="ECO:0000312" key="6">
    <source>
        <dbReference type="EMBL" id="ABA23463.1"/>
    </source>
</evidence>
<evidence type="ECO:0007744" key="7">
    <source>
        <dbReference type="PDB" id="5TPR"/>
    </source>
</evidence>
<evidence type="ECO:0007829" key="8">
    <source>
        <dbReference type="PDB" id="5TPR"/>
    </source>
</evidence>
<comment type="function">
    <text evidence="1 2">Catalyzes the conversion of sedoheptulose 7-phosphate to demethyl-4-deoxygadusol (DDG) (PubMed:22741921). Involved in the synthesis of the mycosporine-like amino acid shinorine, a natural sunscreen compound that protects the cell against UV radiation (By similarity).</text>
</comment>
<comment type="catalytic activity">
    <reaction evidence="2">
        <text>D-sedoheptulose 7-phosphate = (R)-demethyl-4-deoxygadusol + phosphate + H2O + H(+)</text>
        <dbReference type="Rhea" id="RHEA:49560"/>
        <dbReference type="ChEBI" id="CHEBI:15377"/>
        <dbReference type="ChEBI" id="CHEBI:15378"/>
        <dbReference type="ChEBI" id="CHEBI:43474"/>
        <dbReference type="ChEBI" id="CHEBI:57483"/>
        <dbReference type="ChEBI" id="CHEBI:132139"/>
        <dbReference type="EC" id="4.2.3.154"/>
    </reaction>
</comment>
<comment type="cofactor">
    <cofactor evidence="2 3">
        <name>NAD(+)</name>
        <dbReference type="ChEBI" id="CHEBI:57540"/>
    </cofactor>
</comment>
<comment type="cofactor">
    <cofactor evidence="2">
        <name>Co(2+)</name>
        <dbReference type="ChEBI" id="CHEBI:48828"/>
    </cofactor>
    <cofactor evidence="3">
        <name>Zn(2+)</name>
        <dbReference type="ChEBI" id="CHEBI:29105"/>
    </cofactor>
</comment>
<comment type="biophysicochemical properties">
    <kinetics>
        <KM evidence="2">21.6 uM for sedoheptulose 7-phosphate</KM>
        <text evidence="2">kcat is 3.2 min(-1).</text>
    </kinetics>
</comment>
<comment type="subunit">
    <text evidence="3">Homodimer.</text>
</comment>
<comment type="similarity">
    <text evidence="5">Belongs to the sugar phosphate cyclases superfamily. DDGS family.</text>
</comment>
<protein>
    <recommendedName>
        <fullName evidence="5">Demethyl-4-deoxygadusol synthase</fullName>
        <shortName evidence="4">DDGS</shortName>
        <ecNumber evidence="2">4.2.3.154</ecNumber>
    </recommendedName>
</protein>
<sequence length="410" mass="46172">MSIVQAKFEAKETSFHVEGYEKIEYDLVYVDGIFEIQNSALADVYQGFGRCLAIVDANVSRLYGNQIQAYFQYYGIELRLFPITITEPDKTIQTFERVIDVFADFKLVRKEPVLVVGGGLITDVVGFACSTYRRSSNYIRIPTTLIGLIDASVAIKVAVNHRKLKNRLGAYHASRKVFLDFSLLRTLPTDQVRNGMAELVKIAVVAHQEVFELLEKYGEELLRTHFGNIDATPEIKEIAHRLTYKAIHKMLELEVPNLHELDLDRVIAYGHTWSPTLELAPRLPMFHGHAVNVDMAFSATIAARRGYITIAERDRILGLMSRVGLSLDHPMLDIDILWRGTESITLTRDGLLRAAMPKPIGDCVFVNDLTREELAAALADHKELCTSYPRGGEGVDVYPVYQKELIGSVK</sequence>